<dbReference type="EMBL" id="CR382125">
    <property type="protein sequence ID" value="CAH00080.1"/>
    <property type="molecule type" value="Genomic_DNA"/>
</dbReference>
<dbReference type="RefSeq" id="XP_454993.1">
    <property type="nucleotide sequence ID" value="XM_454993.1"/>
</dbReference>
<dbReference type="FunCoup" id="Q6CM46">
    <property type="interactions" value="44"/>
</dbReference>
<dbReference type="STRING" id="284590.Q6CM46"/>
<dbReference type="PaxDb" id="284590-Q6CM46"/>
<dbReference type="KEGG" id="kla:KLLA0_E23079g"/>
<dbReference type="eggNOG" id="ENOG502R67H">
    <property type="taxonomic scope" value="Eukaryota"/>
</dbReference>
<dbReference type="HOGENOM" id="CLU_017243_0_0_1"/>
<dbReference type="InParanoid" id="Q6CM46"/>
<dbReference type="Proteomes" id="UP000000598">
    <property type="component" value="Chromosome E"/>
</dbReference>
<dbReference type="InterPro" id="IPR036047">
    <property type="entry name" value="F-box-like_dom_sf"/>
</dbReference>
<dbReference type="SUPFAM" id="SSF81383">
    <property type="entry name" value="F-box domain"/>
    <property type="match status" value="1"/>
</dbReference>
<organism>
    <name type="scientific">Kluyveromyces lactis (strain ATCC 8585 / CBS 2359 / DSM 70799 / NBRC 1267 / NRRL Y-1140 / WM37)</name>
    <name type="common">Yeast</name>
    <name type="synonym">Candida sphaerica</name>
    <dbReference type="NCBI Taxonomy" id="284590"/>
    <lineage>
        <taxon>Eukaryota</taxon>
        <taxon>Fungi</taxon>
        <taxon>Dikarya</taxon>
        <taxon>Ascomycota</taxon>
        <taxon>Saccharomycotina</taxon>
        <taxon>Saccharomycetes</taxon>
        <taxon>Saccharomycetales</taxon>
        <taxon>Saccharomycetaceae</taxon>
        <taxon>Kluyveromyces</taxon>
    </lineage>
</organism>
<keyword id="KW-1185">Reference proteome</keyword>
<keyword id="KW-0833">Ubl conjugation pathway</keyword>
<feature type="chain" id="PRO_0000279195" description="F-box protein COS111">
    <location>
        <begin position="1"/>
        <end position="726"/>
    </location>
</feature>
<feature type="domain" description="F-box">
    <location>
        <begin position="143"/>
        <end position="194"/>
    </location>
</feature>
<feature type="region of interest" description="Disordered" evidence="2">
    <location>
        <begin position="276"/>
        <end position="295"/>
    </location>
</feature>
<feature type="compositionally biased region" description="Low complexity" evidence="2">
    <location>
        <begin position="284"/>
        <end position="295"/>
    </location>
</feature>
<name>CS111_KLULA</name>
<protein>
    <recommendedName>
        <fullName>F-box protein COS111</fullName>
    </recommendedName>
</protein>
<gene>
    <name type="primary">COS111</name>
    <name type="ordered locus">KLLA0E23166g</name>
</gene>
<sequence length="726" mass="83464">MGKTNKNRIKTGISYRSLHLLISANETVKEKREAEQLPALDNDTQCLMSTGKVHILNADYSRYGVSVYDKLYGYSSSAASTIEEEDKGSGDGFKKRYMSLMQGSSQWKSRKLKQKKNAPKASAKAKAFLVRLHSEKRRHEVDFADINCLPEEIICRIIANLNDADSQRNCLLVSQEWSECAKRIIYKDVKFTSTYRVGQFVTTLRENPQYGKYVESLDLSQLKNGFINDESSTLENDVSQSSYGFEPPDIAYAGWRDWRYRKNSLYGSEMLSSIHRSRTRRSSDASSMNSSVFSHNYNRTRSSSVTSLVSRSTQTAAGSKNVVKRIRKLFSNSFRGKGQQKTHLHQNNGSGLSTLELKDEQFAAGTDSCSLRRSHLPFTNKFFLKYAHLRDLPLGYIIHLLTLCVNLKSINLSNLSLSPDFEIEELEYKRNGYVSFFPEETEEENLNGLNTFNGDRELTPKFFSDSDKPYHYYKDTQYESIIWKLDSSRDNNMFTNRRRSRKKFQLKILTNDDLCEAILSLKHMKHLNVGNVVWLMQRDMKRLIVHSMESCIIEDRCLDKIYMNFEGSGLQTNLPLAGQGLLKAMVLLQVITDMTNNCSDDQILEWFELRWIPTFRRVSQPADLVYLARACDQLHYVIQSEESPTYTRVGEVLITESHTGHYKYEISRNVNNVYLTIQIENGKPDTITDVKLKECSDRLLERVSNLRKNQLLQHTGENFFSTAGLA</sequence>
<evidence type="ECO:0000250" key="1"/>
<evidence type="ECO:0000256" key="2">
    <source>
        <dbReference type="SAM" id="MobiDB-lite"/>
    </source>
</evidence>
<accession>Q6CM46</accession>
<reference key="1">
    <citation type="journal article" date="2004" name="Nature">
        <title>Genome evolution in yeasts.</title>
        <authorList>
            <person name="Dujon B."/>
            <person name="Sherman D."/>
            <person name="Fischer G."/>
            <person name="Durrens P."/>
            <person name="Casaregola S."/>
            <person name="Lafontaine I."/>
            <person name="de Montigny J."/>
            <person name="Marck C."/>
            <person name="Neuveglise C."/>
            <person name="Talla E."/>
            <person name="Goffard N."/>
            <person name="Frangeul L."/>
            <person name="Aigle M."/>
            <person name="Anthouard V."/>
            <person name="Babour A."/>
            <person name="Barbe V."/>
            <person name="Barnay S."/>
            <person name="Blanchin S."/>
            <person name="Beckerich J.-M."/>
            <person name="Beyne E."/>
            <person name="Bleykasten C."/>
            <person name="Boisrame A."/>
            <person name="Boyer J."/>
            <person name="Cattolico L."/>
            <person name="Confanioleri F."/>
            <person name="de Daruvar A."/>
            <person name="Despons L."/>
            <person name="Fabre E."/>
            <person name="Fairhead C."/>
            <person name="Ferry-Dumazet H."/>
            <person name="Groppi A."/>
            <person name="Hantraye F."/>
            <person name="Hennequin C."/>
            <person name="Jauniaux N."/>
            <person name="Joyet P."/>
            <person name="Kachouri R."/>
            <person name="Kerrest A."/>
            <person name="Koszul R."/>
            <person name="Lemaire M."/>
            <person name="Lesur I."/>
            <person name="Ma L."/>
            <person name="Muller H."/>
            <person name="Nicaud J.-M."/>
            <person name="Nikolski M."/>
            <person name="Oztas S."/>
            <person name="Ozier-Kalogeropoulos O."/>
            <person name="Pellenz S."/>
            <person name="Potier S."/>
            <person name="Richard G.-F."/>
            <person name="Straub M.-L."/>
            <person name="Suleau A."/>
            <person name="Swennen D."/>
            <person name="Tekaia F."/>
            <person name="Wesolowski-Louvel M."/>
            <person name="Westhof E."/>
            <person name="Wirth B."/>
            <person name="Zeniou-Meyer M."/>
            <person name="Zivanovic Y."/>
            <person name="Bolotin-Fukuhara M."/>
            <person name="Thierry A."/>
            <person name="Bouchier C."/>
            <person name="Caudron B."/>
            <person name="Scarpelli C."/>
            <person name="Gaillardin C."/>
            <person name="Weissenbach J."/>
            <person name="Wincker P."/>
            <person name="Souciet J.-L."/>
        </authorList>
    </citation>
    <scope>NUCLEOTIDE SEQUENCE [LARGE SCALE GENOMIC DNA]</scope>
    <source>
        <strain>ATCC 8585 / CBS 2359 / DSM 70799 / NBRC 1267 / NRRL Y-1140 / WM37</strain>
    </source>
</reference>
<proteinExistence type="inferred from homology"/>
<comment type="function">
    <text evidence="1">F-box protein probably involved in ubiquitin conjugation pathway.</text>
</comment>